<reference key="1">
    <citation type="journal article" date="2010" name="PLoS ONE">
        <title>The complete genome sequence of Cupriavidus metallidurans strain CH34, a master survivalist in harsh and anthropogenic environments.</title>
        <authorList>
            <person name="Janssen P.J."/>
            <person name="Van Houdt R."/>
            <person name="Moors H."/>
            <person name="Monsieurs P."/>
            <person name="Morin N."/>
            <person name="Michaux A."/>
            <person name="Benotmane M.A."/>
            <person name="Leys N."/>
            <person name="Vallaeys T."/>
            <person name="Lapidus A."/>
            <person name="Monchy S."/>
            <person name="Medigue C."/>
            <person name="Taghavi S."/>
            <person name="McCorkle S."/>
            <person name="Dunn J."/>
            <person name="van der Lelie D."/>
            <person name="Mergeay M."/>
        </authorList>
    </citation>
    <scope>NUCLEOTIDE SEQUENCE [LARGE SCALE GENOMIC DNA]</scope>
    <source>
        <strain>ATCC 43123 / DSM 2839 / NBRC 102507 / CH34</strain>
    </source>
</reference>
<feature type="chain" id="PRO_1000047476" description="Glycine--tRNA ligase alpha subunit">
    <location>
        <begin position="1"/>
        <end position="317"/>
    </location>
</feature>
<proteinExistence type="inferred from homology"/>
<dbReference type="EC" id="6.1.1.14" evidence="1"/>
<dbReference type="EMBL" id="CP000352">
    <property type="protein sequence ID" value="ABF07334.1"/>
    <property type="molecule type" value="Genomic_DNA"/>
</dbReference>
<dbReference type="RefSeq" id="WP_011515322.1">
    <property type="nucleotide sequence ID" value="NC_007973.1"/>
</dbReference>
<dbReference type="SMR" id="Q1LR92"/>
<dbReference type="STRING" id="266264.Rmet_0448"/>
<dbReference type="KEGG" id="rme:Rmet_0448"/>
<dbReference type="eggNOG" id="COG0752">
    <property type="taxonomic scope" value="Bacteria"/>
</dbReference>
<dbReference type="HOGENOM" id="CLU_057066_1_0_4"/>
<dbReference type="Proteomes" id="UP000002429">
    <property type="component" value="Chromosome"/>
</dbReference>
<dbReference type="GO" id="GO:0005829">
    <property type="term" value="C:cytosol"/>
    <property type="evidence" value="ECO:0007669"/>
    <property type="project" value="TreeGrafter"/>
</dbReference>
<dbReference type="GO" id="GO:0005524">
    <property type="term" value="F:ATP binding"/>
    <property type="evidence" value="ECO:0007669"/>
    <property type="project" value="UniProtKB-UniRule"/>
</dbReference>
<dbReference type="GO" id="GO:0004820">
    <property type="term" value="F:glycine-tRNA ligase activity"/>
    <property type="evidence" value="ECO:0007669"/>
    <property type="project" value="UniProtKB-UniRule"/>
</dbReference>
<dbReference type="GO" id="GO:0006426">
    <property type="term" value="P:glycyl-tRNA aminoacylation"/>
    <property type="evidence" value="ECO:0007669"/>
    <property type="project" value="UniProtKB-UniRule"/>
</dbReference>
<dbReference type="CDD" id="cd00733">
    <property type="entry name" value="GlyRS_alpha_core"/>
    <property type="match status" value="1"/>
</dbReference>
<dbReference type="FunFam" id="3.30.930.10:FF:000006">
    <property type="entry name" value="Glycine--tRNA ligase alpha subunit"/>
    <property type="match status" value="1"/>
</dbReference>
<dbReference type="Gene3D" id="3.30.930.10">
    <property type="entry name" value="Bira Bifunctional Protein, Domain 2"/>
    <property type="match status" value="1"/>
</dbReference>
<dbReference type="Gene3D" id="1.20.58.180">
    <property type="entry name" value="Class II aaRS and biotin synthetases, domain 2"/>
    <property type="match status" value="1"/>
</dbReference>
<dbReference type="HAMAP" id="MF_00254">
    <property type="entry name" value="Gly_tRNA_synth_alpha"/>
    <property type="match status" value="1"/>
</dbReference>
<dbReference type="InterPro" id="IPR045864">
    <property type="entry name" value="aa-tRNA-synth_II/BPL/LPL"/>
</dbReference>
<dbReference type="InterPro" id="IPR006194">
    <property type="entry name" value="Gly-tRNA-synth_heterodimer"/>
</dbReference>
<dbReference type="InterPro" id="IPR002310">
    <property type="entry name" value="Gly-tRNA_ligase_asu"/>
</dbReference>
<dbReference type="NCBIfam" id="TIGR00388">
    <property type="entry name" value="glyQ"/>
    <property type="match status" value="1"/>
</dbReference>
<dbReference type="NCBIfam" id="NF006827">
    <property type="entry name" value="PRK09348.1"/>
    <property type="match status" value="1"/>
</dbReference>
<dbReference type="PANTHER" id="PTHR30075:SF2">
    <property type="entry name" value="GLYCINE--TRNA LIGASE, CHLOROPLASTIC_MITOCHONDRIAL 2"/>
    <property type="match status" value="1"/>
</dbReference>
<dbReference type="PANTHER" id="PTHR30075">
    <property type="entry name" value="GLYCYL-TRNA SYNTHETASE"/>
    <property type="match status" value="1"/>
</dbReference>
<dbReference type="Pfam" id="PF02091">
    <property type="entry name" value="tRNA-synt_2e"/>
    <property type="match status" value="1"/>
</dbReference>
<dbReference type="PRINTS" id="PR01044">
    <property type="entry name" value="TRNASYNTHGA"/>
</dbReference>
<dbReference type="SUPFAM" id="SSF55681">
    <property type="entry name" value="Class II aaRS and biotin synthetases"/>
    <property type="match status" value="1"/>
</dbReference>
<dbReference type="PROSITE" id="PS50861">
    <property type="entry name" value="AA_TRNA_LIGASE_II_GLYAB"/>
    <property type="match status" value="1"/>
</dbReference>
<organism>
    <name type="scientific">Cupriavidus metallidurans (strain ATCC 43123 / DSM 2839 / NBRC 102507 / CH34)</name>
    <name type="common">Ralstonia metallidurans</name>
    <dbReference type="NCBI Taxonomy" id="266264"/>
    <lineage>
        <taxon>Bacteria</taxon>
        <taxon>Pseudomonadati</taxon>
        <taxon>Pseudomonadota</taxon>
        <taxon>Betaproteobacteria</taxon>
        <taxon>Burkholderiales</taxon>
        <taxon>Burkholderiaceae</taxon>
        <taxon>Cupriavidus</taxon>
    </lineage>
</organism>
<gene>
    <name evidence="1" type="primary">glyQ</name>
    <name type="ordered locus">Rmet_0448</name>
</gene>
<evidence type="ECO:0000255" key="1">
    <source>
        <dbReference type="HAMAP-Rule" id="MF_00254"/>
    </source>
</evidence>
<sequence>MLTFQQMILTLQAYWDRQGCALLQPIDLEVGAGTSHVHTFLRAIGPEPWRAAYVQPSRRPKDGRYGENPNRLQHYYQYQVVLKPAPENILELYLGSLEALGLDLKQNDIRFVEDDWENPTLGAWGLGWEVWLNGMEVTQFTYFQQVGGIDCKPITGEITYGIERLAMYLQKVENIYDLVWTEWQENGETRRLTYGDVYHQNEVEQSTYNFEHSNTEILFRHFAEHESEAKRLMGDTGEKAEGAQEKAAGTRLALPAYEQVLKAAHTFNLLDARGAISVTERAAYIGRIRNLSRQVAQAYYDSREALGFPMCKTEARA</sequence>
<comment type="catalytic activity">
    <reaction evidence="1">
        <text>tRNA(Gly) + glycine + ATP = glycyl-tRNA(Gly) + AMP + diphosphate</text>
        <dbReference type="Rhea" id="RHEA:16013"/>
        <dbReference type="Rhea" id="RHEA-COMP:9664"/>
        <dbReference type="Rhea" id="RHEA-COMP:9683"/>
        <dbReference type="ChEBI" id="CHEBI:30616"/>
        <dbReference type="ChEBI" id="CHEBI:33019"/>
        <dbReference type="ChEBI" id="CHEBI:57305"/>
        <dbReference type="ChEBI" id="CHEBI:78442"/>
        <dbReference type="ChEBI" id="CHEBI:78522"/>
        <dbReference type="ChEBI" id="CHEBI:456215"/>
        <dbReference type="EC" id="6.1.1.14"/>
    </reaction>
</comment>
<comment type="subunit">
    <text evidence="1">Tetramer of two alpha and two beta subunits.</text>
</comment>
<comment type="subcellular location">
    <subcellularLocation>
        <location evidence="1">Cytoplasm</location>
    </subcellularLocation>
</comment>
<comment type="similarity">
    <text evidence="1">Belongs to the class-II aminoacyl-tRNA synthetase family.</text>
</comment>
<accession>Q1LR92</accession>
<protein>
    <recommendedName>
        <fullName evidence="1">Glycine--tRNA ligase alpha subunit</fullName>
        <ecNumber evidence="1">6.1.1.14</ecNumber>
    </recommendedName>
    <alternativeName>
        <fullName evidence="1">Glycyl-tRNA synthetase alpha subunit</fullName>
        <shortName evidence="1">GlyRS</shortName>
    </alternativeName>
</protein>
<name>SYGA_CUPMC</name>
<keyword id="KW-0030">Aminoacyl-tRNA synthetase</keyword>
<keyword id="KW-0067">ATP-binding</keyword>
<keyword id="KW-0963">Cytoplasm</keyword>
<keyword id="KW-0436">Ligase</keyword>
<keyword id="KW-0547">Nucleotide-binding</keyword>
<keyword id="KW-0648">Protein biosynthesis</keyword>
<keyword id="KW-1185">Reference proteome</keyword>